<reference key="1">
    <citation type="submission" date="2005-09" db="EMBL/GenBank/DDBJ databases">
        <authorList>
            <consortium name="NIH - Mammalian Gene Collection (MGC) project"/>
        </authorList>
    </citation>
    <scope>NUCLEOTIDE SEQUENCE [LARGE SCALE MRNA]</scope>
    <source>
        <strain>Crossbred X Angus</strain>
        <tissue>Ileum</tissue>
    </source>
</reference>
<evidence type="ECO:0000250" key="1">
    <source>
        <dbReference type="UniProtKB" id="P42766"/>
    </source>
</evidence>
<evidence type="ECO:0000256" key="2">
    <source>
        <dbReference type="SAM" id="MobiDB-lite"/>
    </source>
</evidence>
<evidence type="ECO:0000305" key="3"/>
<keyword id="KW-0007">Acetylation</keyword>
<keyword id="KW-0963">Cytoplasm</keyword>
<keyword id="KW-1017">Isopeptide bond</keyword>
<keyword id="KW-0597">Phosphoprotein</keyword>
<keyword id="KW-1185">Reference proteome</keyword>
<keyword id="KW-0687">Ribonucleoprotein</keyword>
<keyword id="KW-0689">Ribosomal protein</keyword>
<keyword id="KW-0832">Ubl conjugation</keyword>
<name>RL35_BOVIN</name>
<protein>
    <recommendedName>
        <fullName evidence="3">Large ribosomal subunit protein uL29</fullName>
    </recommendedName>
    <alternativeName>
        <fullName>60S ribosomal protein L35</fullName>
    </alternativeName>
</protein>
<organism>
    <name type="scientific">Bos taurus</name>
    <name type="common">Bovine</name>
    <dbReference type="NCBI Taxonomy" id="9913"/>
    <lineage>
        <taxon>Eukaryota</taxon>
        <taxon>Metazoa</taxon>
        <taxon>Chordata</taxon>
        <taxon>Craniata</taxon>
        <taxon>Vertebrata</taxon>
        <taxon>Euteleostomi</taxon>
        <taxon>Mammalia</taxon>
        <taxon>Eutheria</taxon>
        <taxon>Laurasiatheria</taxon>
        <taxon>Artiodactyla</taxon>
        <taxon>Ruminantia</taxon>
        <taxon>Pecora</taxon>
        <taxon>Bovidae</taxon>
        <taxon>Bovinae</taxon>
        <taxon>Bos</taxon>
    </lineage>
</organism>
<gene>
    <name type="primary">RPL35</name>
</gene>
<dbReference type="EMBL" id="BC105179">
    <property type="protein sequence ID" value="AAI05180.1"/>
    <property type="molecule type" value="mRNA"/>
</dbReference>
<dbReference type="RefSeq" id="NP_001029667.1">
    <property type="nucleotide sequence ID" value="NM_001034495.1"/>
</dbReference>
<dbReference type="SMR" id="Q3MHM7"/>
<dbReference type="FunCoup" id="Q3MHM7">
    <property type="interactions" value="2287"/>
</dbReference>
<dbReference type="STRING" id="9913.ENSBTAP00000070645"/>
<dbReference type="PaxDb" id="9913-ENSBTAP00000004161"/>
<dbReference type="PeptideAtlas" id="Q3MHM7"/>
<dbReference type="Ensembl" id="ENSBTAT00000004161.4">
    <property type="protein sequence ID" value="ENSBTAP00000004161.3"/>
    <property type="gene ID" value="ENSBTAG00000003205.5"/>
</dbReference>
<dbReference type="GeneID" id="515534"/>
<dbReference type="KEGG" id="bta:515534"/>
<dbReference type="CTD" id="11224"/>
<dbReference type="VEuPathDB" id="HostDB:ENSBTAG00000003205"/>
<dbReference type="eggNOG" id="KOG3436">
    <property type="taxonomic scope" value="Eukaryota"/>
</dbReference>
<dbReference type="GeneTree" id="ENSGT00390000016384"/>
<dbReference type="HOGENOM" id="CLU_110381_1_1_1"/>
<dbReference type="InParanoid" id="Q3MHM7"/>
<dbReference type="OrthoDB" id="528635at2759"/>
<dbReference type="TreeFam" id="TF314951"/>
<dbReference type="Reactome" id="R-BTA-156827">
    <property type="pathway name" value="L13a-mediated translational silencing of Ceruloplasmin expression"/>
</dbReference>
<dbReference type="Reactome" id="R-BTA-1799339">
    <property type="pathway name" value="SRP-dependent cotranslational protein targeting to membrane"/>
</dbReference>
<dbReference type="Reactome" id="R-BTA-6791226">
    <property type="pathway name" value="Major pathway of rRNA processing in the nucleolus and cytosol"/>
</dbReference>
<dbReference type="Reactome" id="R-BTA-72689">
    <property type="pathway name" value="Formation of a pool of free 40S subunits"/>
</dbReference>
<dbReference type="Reactome" id="R-BTA-72706">
    <property type="pathway name" value="GTP hydrolysis and joining of the 60S ribosomal subunit"/>
</dbReference>
<dbReference type="Reactome" id="R-BTA-975956">
    <property type="pathway name" value="Nonsense Mediated Decay (NMD) independent of the Exon Junction Complex (EJC)"/>
</dbReference>
<dbReference type="Reactome" id="R-BTA-975957">
    <property type="pathway name" value="Nonsense Mediated Decay (NMD) enhanced by the Exon Junction Complex (EJC)"/>
</dbReference>
<dbReference type="Proteomes" id="UP000009136">
    <property type="component" value="Chromosome 11"/>
</dbReference>
<dbReference type="Bgee" id="ENSBTAG00000003205">
    <property type="expression patterns" value="Expressed in ileocecal valve and 106 other cell types or tissues"/>
</dbReference>
<dbReference type="GO" id="GO:0022625">
    <property type="term" value="C:cytosolic large ribosomal subunit"/>
    <property type="evidence" value="ECO:0000318"/>
    <property type="project" value="GO_Central"/>
</dbReference>
<dbReference type="GO" id="GO:0003729">
    <property type="term" value="F:mRNA binding"/>
    <property type="evidence" value="ECO:0000318"/>
    <property type="project" value="GO_Central"/>
</dbReference>
<dbReference type="GO" id="GO:0003735">
    <property type="term" value="F:structural constituent of ribosome"/>
    <property type="evidence" value="ECO:0000318"/>
    <property type="project" value="GO_Central"/>
</dbReference>
<dbReference type="GO" id="GO:0000463">
    <property type="term" value="P:maturation of LSU-rRNA from tricistronic rRNA transcript (SSU-rRNA, 5.8S rRNA, LSU-rRNA)"/>
    <property type="evidence" value="ECO:0000318"/>
    <property type="project" value="GO_Central"/>
</dbReference>
<dbReference type="GO" id="GO:0006412">
    <property type="term" value="P:translation"/>
    <property type="evidence" value="ECO:0007669"/>
    <property type="project" value="InterPro"/>
</dbReference>
<dbReference type="CDD" id="cd00427">
    <property type="entry name" value="Ribosomal_L29_HIP"/>
    <property type="match status" value="1"/>
</dbReference>
<dbReference type="FunFam" id="1.10.287.310:FF:000002">
    <property type="entry name" value="60S ribosomal protein L35"/>
    <property type="match status" value="1"/>
</dbReference>
<dbReference type="FunFam" id="6.10.250.3450:FF:000001">
    <property type="entry name" value="60S ribosomal protein L35"/>
    <property type="match status" value="1"/>
</dbReference>
<dbReference type="Gene3D" id="1.10.287.310">
    <property type="match status" value="1"/>
</dbReference>
<dbReference type="Gene3D" id="6.10.250.3450">
    <property type="match status" value="1"/>
</dbReference>
<dbReference type="HAMAP" id="MF_00374">
    <property type="entry name" value="Ribosomal_uL29"/>
    <property type="match status" value="1"/>
</dbReference>
<dbReference type="InterPro" id="IPR001854">
    <property type="entry name" value="Ribosomal_uL29"/>
</dbReference>
<dbReference type="InterPro" id="IPR018254">
    <property type="entry name" value="Ribosomal_uL29_CS"/>
</dbReference>
<dbReference type="InterPro" id="IPR045059">
    <property type="entry name" value="Ribosomal_uL29_euk"/>
</dbReference>
<dbReference type="InterPro" id="IPR036049">
    <property type="entry name" value="Ribosomal_uL29_sf"/>
</dbReference>
<dbReference type="NCBIfam" id="TIGR00012">
    <property type="entry name" value="L29"/>
    <property type="match status" value="1"/>
</dbReference>
<dbReference type="PANTHER" id="PTHR45722">
    <property type="entry name" value="60S RIBOSOMAL PROTEIN L35"/>
    <property type="match status" value="1"/>
</dbReference>
<dbReference type="PANTHER" id="PTHR45722:SF2">
    <property type="entry name" value="LARGE RIBOSOMAL SUBUNIT PROTEIN UL29-RELATED"/>
    <property type="match status" value="1"/>
</dbReference>
<dbReference type="Pfam" id="PF00831">
    <property type="entry name" value="Ribosomal_L29"/>
    <property type="match status" value="1"/>
</dbReference>
<dbReference type="SUPFAM" id="SSF46561">
    <property type="entry name" value="Ribosomal protein L29 (L29p)"/>
    <property type="match status" value="1"/>
</dbReference>
<dbReference type="PROSITE" id="PS00579">
    <property type="entry name" value="RIBOSOMAL_L29"/>
    <property type="match status" value="1"/>
</dbReference>
<sequence>MAKIKARDLRGKKKEELLKQLEDLKVELSQLRVAKVTGGAASKLSKIRVVRKSIARVLTVINQTQKENLRKFYKGKKYKPLDLRPKKTRAMRRRLNKHEENLKTKKQQRKERLYPLRKYAVKA</sequence>
<feature type="chain" id="PRO_0000232711" description="Large ribosomal subunit protein uL29">
    <location>
        <begin position="1"/>
        <end position="123"/>
    </location>
</feature>
<feature type="region of interest" description="Disordered" evidence="2">
    <location>
        <begin position="95"/>
        <end position="114"/>
    </location>
</feature>
<feature type="modified residue" description="N6-acetyllysine" evidence="1">
    <location>
        <position position="19"/>
    </location>
</feature>
<feature type="modified residue" description="Phosphoserine" evidence="1">
    <location>
        <position position="29"/>
    </location>
</feature>
<feature type="modified residue" description="N6-acetyllysine" evidence="1">
    <location>
        <position position="43"/>
    </location>
</feature>
<feature type="cross-link" description="Glycyl lysine isopeptide (Lys-Gly) (interchain with G-Cter in SUMO2)" evidence="1">
    <location>
        <position position="25"/>
    </location>
</feature>
<accession>Q3MHM7</accession>
<proteinExistence type="evidence at transcript level"/>
<comment type="function">
    <text evidence="1">Component of the large ribosomal subunit. The ribosome is a large ribonucleoprotein complex responsible for the synthesis of proteins in the cell.</text>
</comment>
<comment type="subunit">
    <text evidence="1">Component of the large ribosomal subunit.</text>
</comment>
<comment type="subcellular location">
    <subcellularLocation>
        <location evidence="1">Cytoplasm</location>
    </subcellularLocation>
</comment>
<comment type="similarity">
    <text evidence="3">Belongs to the universal ribosomal protein uL29 family.</text>
</comment>